<dbReference type="EC" id="2.7.11.11" evidence="1"/>
<dbReference type="EMBL" id="HE600983">
    <property type="protein sequence ID" value="CAP32882.2"/>
    <property type="molecule type" value="Genomic_DNA"/>
</dbReference>
<dbReference type="RefSeq" id="XP_045095387.1">
    <property type="nucleotide sequence ID" value="XM_045239533.1"/>
</dbReference>
<dbReference type="SMR" id="A8XJQ6"/>
<dbReference type="FunCoup" id="A8XJQ6">
    <property type="interactions" value="638"/>
</dbReference>
<dbReference type="STRING" id="6238.A8XJQ6"/>
<dbReference type="GeneID" id="8586439"/>
<dbReference type="WormBase" id="CBG14305">
    <property type="protein sequence ID" value="CBP09612"/>
    <property type="gene ID" value="WBGene00034852"/>
</dbReference>
<dbReference type="eggNOG" id="KOG0616">
    <property type="taxonomic scope" value="Eukaryota"/>
</dbReference>
<dbReference type="HOGENOM" id="CLU_000288_63_5_1"/>
<dbReference type="InParanoid" id="A8XJQ6"/>
<dbReference type="OMA" id="NSMARFY"/>
<dbReference type="Proteomes" id="UP000008549">
    <property type="component" value="Unassembled WGS sequence"/>
</dbReference>
<dbReference type="GO" id="GO:0005952">
    <property type="term" value="C:cAMP-dependent protein kinase complex"/>
    <property type="evidence" value="ECO:0000318"/>
    <property type="project" value="GO_Central"/>
</dbReference>
<dbReference type="GO" id="GO:0005829">
    <property type="term" value="C:cytosol"/>
    <property type="evidence" value="ECO:0000318"/>
    <property type="project" value="GO_Central"/>
</dbReference>
<dbReference type="GO" id="GO:0005524">
    <property type="term" value="F:ATP binding"/>
    <property type="evidence" value="ECO:0007669"/>
    <property type="project" value="UniProtKB-KW"/>
</dbReference>
<dbReference type="GO" id="GO:0004691">
    <property type="term" value="F:cAMP-dependent protein kinase activity"/>
    <property type="evidence" value="ECO:0000318"/>
    <property type="project" value="GO_Central"/>
</dbReference>
<dbReference type="GO" id="GO:0106310">
    <property type="term" value="F:protein serine kinase activity"/>
    <property type="evidence" value="ECO:0007669"/>
    <property type="project" value="RHEA"/>
</dbReference>
<dbReference type="GO" id="GO:0007155">
    <property type="term" value="P:cell adhesion"/>
    <property type="evidence" value="ECO:0000318"/>
    <property type="project" value="GO_Central"/>
</dbReference>
<dbReference type="GO" id="GO:0007165">
    <property type="term" value="P:signal transduction"/>
    <property type="evidence" value="ECO:0000318"/>
    <property type="project" value="GO_Central"/>
</dbReference>
<dbReference type="FunFam" id="3.30.200.20:FF:000042">
    <property type="entry name" value="Aurora kinase A"/>
    <property type="match status" value="1"/>
</dbReference>
<dbReference type="FunFam" id="1.10.510.10:FF:000005">
    <property type="entry name" value="cAMP-dependent protein kinase catalytic subunit alpha"/>
    <property type="match status" value="1"/>
</dbReference>
<dbReference type="Gene3D" id="3.30.200.20">
    <property type="entry name" value="Phosphorylase Kinase, domain 1"/>
    <property type="match status" value="1"/>
</dbReference>
<dbReference type="Gene3D" id="1.10.510.10">
    <property type="entry name" value="Transferase(Phosphotransferase) domain 1"/>
    <property type="match status" value="1"/>
</dbReference>
<dbReference type="InterPro" id="IPR011009">
    <property type="entry name" value="Kinase-like_dom_sf"/>
</dbReference>
<dbReference type="InterPro" id="IPR000719">
    <property type="entry name" value="Prot_kinase_dom"/>
</dbReference>
<dbReference type="InterPro" id="IPR017441">
    <property type="entry name" value="Protein_kinase_ATP_BS"/>
</dbReference>
<dbReference type="InterPro" id="IPR008271">
    <property type="entry name" value="Ser/Thr_kinase_AS"/>
</dbReference>
<dbReference type="PANTHER" id="PTHR24353:SF37">
    <property type="entry name" value="CAMP-DEPENDENT PROTEIN KINASE CATALYTIC SUBUNIT PRKX"/>
    <property type="match status" value="1"/>
</dbReference>
<dbReference type="PANTHER" id="PTHR24353">
    <property type="entry name" value="CYCLIC NUCLEOTIDE-DEPENDENT PROTEIN KINASE"/>
    <property type="match status" value="1"/>
</dbReference>
<dbReference type="Pfam" id="PF00069">
    <property type="entry name" value="Pkinase"/>
    <property type="match status" value="1"/>
</dbReference>
<dbReference type="SMART" id="SM00220">
    <property type="entry name" value="S_TKc"/>
    <property type="match status" value="1"/>
</dbReference>
<dbReference type="SUPFAM" id="SSF56112">
    <property type="entry name" value="Protein kinase-like (PK-like)"/>
    <property type="match status" value="1"/>
</dbReference>
<dbReference type="PROSITE" id="PS00107">
    <property type="entry name" value="PROTEIN_KINASE_ATP"/>
    <property type="match status" value="1"/>
</dbReference>
<dbReference type="PROSITE" id="PS50011">
    <property type="entry name" value="PROTEIN_KINASE_DOM"/>
    <property type="match status" value="1"/>
</dbReference>
<dbReference type="PROSITE" id="PS00108">
    <property type="entry name" value="PROTEIN_KINASE_ST"/>
    <property type="match status" value="1"/>
</dbReference>
<reference evidence="7" key="1">
    <citation type="journal article" date="2003" name="PLoS Biol.">
        <title>The genome sequence of Caenorhabditis briggsae: a platform for comparative genomics.</title>
        <authorList>
            <person name="Stein L.D."/>
            <person name="Bao Z."/>
            <person name="Blasiar D."/>
            <person name="Blumenthal T."/>
            <person name="Brent M.R."/>
            <person name="Chen N."/>
            <person name="Chinwalla A."/>
            <person name="Clarke L."/>
            <person name="Clee C."/>
            <person name="Coghlan A."/>
            <person name="Coulson A."/>
            <person name="D'Eustachio P."/>
            <person name="Fitch D.H.A."/>
            <person name="Fulton L.A."/>
            <person name="Fulton R.E."/>
            <person name="Griffiths-Jones S."/>
            <person name="Harris T.W."/>
            <person name="Hillier L.W."/>
            <person name="Kamath R."/>
            <person name="Kuwabara P.E."/>
            <person name="Mardis E.R."/>
            <person name="Marra M.A."/>
            <person name="Miner T.L."/>
            <person name="Minx P."/>
            <person name="Mullikin J.C."/>
            <person name="Plumb R.W."/>
            <person name="Rogers J."/>
            <person name="Schein J.E."/>
            <person name="Sohrmann M."/>
            <person name="Spieth J."/>
            <person name="Stajich J.E."/>
            <person name="Wei C."/>
            <person name="Willey D."/>
            <person name="Wilson R.K."/>
            <person name="Durbin R.M."/>
            <person name="Waterston R.H."/>
        </authorList>
    </citation>
    <scope>NUCLEOTIDE SEQUENCE [LARGE SCALE GENOMIC DNA]</scope>
    <source>
        <strain evidence="7">AF16</strain>
    </source>
</reference>
<reference evidence="6" key="2">
    <citation type="journal article" date="2006" name="Cell. Signal.">
        <title>Expression of multiple isoforms of the cAMP-dependent protein kinase (PK-A) catalytic subunit in the nematode, Caenorhabditis elegans.</title>
        <authorList>
            <person name="Bowen L.C."/>
            <person name="Bicknell A.V."/>
            <person name="Tabish M."/>
            <person name="Clegg R.A."/>
            <person name="Rees H.H."/>
            <person name="Fisher M.J."/>
        </authorList>
    </citation>
    <scope>DEVELOPMENTAL STAGE</scope>
</reference>
<proteinExistence type="evidence at protein level"/>
<comment type="catalytic activity">
    <reaction evidence="1">
        <text>L-seryl-[protein] + ATP = O-phospho-L-seryl-[protein] + ADP + H(+)</text>
        <dbReference type="Rhea" id="RHEA:17989"/>
        <dbReference type="Rhea" id="RHEA-COMP:9863"/>
        <dbReference type="Rhea" id="RHEA-COMP:11604"/>
        <dbReference type="ChEBI" id="CHEBI:15378"/>
        <dbReference type="ChEBI" id="CHEBI:29999"/>
        <dbReference type="ChEBI" id="CHEBI:30616"/>
        <dbReference type="ChEBI" id="CHEBI:83421"/>
        <dbReference type="ChEBI" id="CHEBI:456216"/>
        <dbReference type="EC" id="2.7.11.11"/>
    </reaction>
</comment>
<comment type="catalytic activity">
    <reaction evidence="1">
        <text>L-threonyl-[protein] + ATP = O-phospho-L-threonyl-[protein] + ADP + H(+)</text>
        <dbReference type="Rhea" id="RHEA:46608"/>
        <dbReference type="Rhea" id="RHEA-COMP:11060"/>
        <dbReference type="Rhea" id="RHEA-COMP:11605"/>
        <dbReference type="ChEBI" id="CHEBI:15378"/>
        <dbReference type="ChEBI" id="CHEBI:30013"/>
        <dbReference type="ChEBI" id="CHEBI:30616"/>
        <dbReference type="ChEBI" id="CHEBI:61977"/>
        <dbReference type="ChEBI" id="CHEBI:456216"/>
        <dbReference type="EC" id="2.7.11.11"/>
    </reaction>
</comment>
<comment type="developmental stage">
    <text evidence="4">No obvious expression before embryo hatching but is probably expressed at later stages (at protein level).</text>
</comment>
<comment type="similarity">
    <text evidence="6">Belongs to the protein kinase superfamily. Ser/Thr protein kinase family. cAMP subfamily.</text>
</comment>
<sequence>MSSSTSSVESVEDESCSNECSASFTFDTNNNSRGDQQVDELAEETHMKLSITPTRESFSLSQLERIVTIGKGTFGRVELARDKISGAHYALKVLNIRRVVDMRQTQHVHNEKRVLLQLKHPFIVKMYASEKDSNNLYMIMEFVPGGEMFSYLRASRSFSNSMARFYASEIVCALEYIHSLGIVYRDLKPENLMLSKEGHIKMADFGFAKELRDRTYTICGTPDYLAPESLARTGHNKGVDWWALGILIYEMMVGKPPFRGKTTAEIYDSIIEHKLKFPRSFNLAAKDLVKKLLEVDRTQRIGCMKNGTQDVKDHKWFEKVNWDDTLHLRVEVKKLIGIFLIPIFQPPIVPTLYHPGDTGNFDDYEEDTTGGPLCSQRERDLFAEW</sequence>
<gene>
    <name evidence="8" type="ORF">CBG14305</name>
</gene>
<organism evidence="7">
    <name type="scientific">Caenorhabditis briggsae</name>
    <dbReference type="NCBI Taxonomy" id="6238"/>
    <lineage>
        <taxon>Eukaryota</taxon>
        <taxon>Metazoa</taxon>
        <taxon>Ecdysozoa</taxon>
        <taxon>Nematoda</taxon>
        <taxon>Chromadorea</taxon>
        <taxon>Rhabditida</taxon>
        <taxon>Rhabditina</taxon>
        <taxon>Rhabditomorpha</taxon>
        <taxon>Rhabditoidea</taxon>
        <taxon>Rhabditidae</taxon>
        <taxon>Peloderinae</taxon>
        <taxon>Caenorhabditis</taxon>
    </lineage>
</organism>
<protein>
    <recommendedName>
        <fullName evidence="5">cAMP-dependent protein kinase, catalytic subunit-like</fullName>
        <ecNumber evidence="1">2.7.11.11</ecNumber>
    </recommendedName>
</protein>
<keyword id="KW-0067">ATP-binding</keyword>
<keyword id="KW-0114">cAMP</keyword>
<keyword id="KW-0418">Kinase</keyword>
<keyword id="KW-0547">Nucleotide-binding</keyword>
<keyword id="KW-1185">Reference proteome</keyword>
<keyword id="KW-0723">Serine/threonine-protein kinase</keyword>
<keyword id="KW-0808">Transferase</keyword>
<accession>A8XJQ6</accession>
<evidence type="ECO:0000250" key="1">
    <source>
        <dbReference type="UniProtKB" id="P21137"/>
    </source>
</evidence>
<evidence type="ECO:0000255" key="2"/>
<evidence type="ECO:0000255" key="3">
    <source>
        <dbReference type="PROSITE-ProRule" id="PRU00159"/>
    </source>
</evidence>
<evidence type="ECO:0000269" key="4">
    <source>
    </source>
</evidence>
<evidence type="ECO:0000303" key="5">
    <source>
    </source>
</evidence>
<evidence type="ECO:0000305" key="6"/>
<evidence type="ECO:0000312" key="7">
    <source>
        <dbReference type="Proteomes" id="UP000008549"/>
    </source>
</evidence>
<evidence type="ECO:0000312" key="8">
    <source>
        <dbReference type="WormBase" id="CBG14305"/>
    </source>
</evidence>
<feature type="chain" id="PRO_0000432403" description="cAMP-dependent protein kinase, catalytic subunit-like">
    <location>
        <begin position="1"/>
        <end position="385"/>
    </location>
</feature>
<feature type="domain" description="Protein kinase" evidence="3">
    <location>
        <begin position="63"/>
        <end position="317"/>
    </location>
</feature>
<feature type="domain" description="AGC-kinase C-terminal" evidence="2">
    <location>
        <begin position="318"/>
        <end position="385"/>
    </location>
</feature>
<feature type="active site" description="Proton acceptor" evidence="3">
    <location>
        <position position="186"/>
    </location>
</feature>
<feature type="binding site" evidence="3">
    <location>
        <begin position="69"/>
        <end position="77"/>
    </location>
    <ligand>
        <name>ATP</name>
        <dbReference type="ChEBI" id="CHEBI:30616"/>
    </ligand>
</feature>
<feature type="binding site" evidence="3">
    <location>
        <position position="92"/>
    </location>
    <ligand>
        <name>ATP</name>
        <dbReference type="ChEBI" id="CHEBI:30616"/>
    </ligand>
</feature>
<name>KAPC2_CAEBR</name>